<evidence type="ECO:0000255" key="1">
    <source>
        <dbReference type="HAMAP-Rule" id="MF_01013"/>
    </source>
</evidence>
<reference key="1">
    <citation type="journal article" date="2009" name="BMC Genomics">
        <title>Pseudogene accumulation in the evolutionary histories of Salmonella enterica serovars Paratyphi A and Typhi.</title>
        <authorList>
            <person name="Holt K.E."/>
            <person name="Thomson N.R."/>
            <person name="Wain J."/>
            <person name="Langridge G.C."/>
            <person name="Hasan R."/>
            <person name="Bhutta Z.A."/>
            <person name="Quail M.A."/>
            <person name="Norbertczak H."/>
            <person name="Walker D."/>
            <person name="Simmonds M."/>
            <person name="White B."/>
            <person name="Bason N."/>
            <person name="Mungall K."/>
            <person name="Dougan G."/>
            <person name="Parkhill J."/>
        </authorList>
    </citation>
    <scope>NUCLEOTIDE SEQUENCE [LARGE SCALE GENOMIC DNA]</scope>
    <source>
        <strain>AKU_12601</strain>
    </source>
</reference>
<feature type="chain" id="PRO_1000190604" description="Imidazole glycerol phosphate synthase subunit HisF">
    <location>
        <begin position="1"/>
        <end position="258"/>
    </location>
</feature>
<feature type="active site" evidence="1">
    <location>
        <position position="11"/>
    </location>
</feature>
<feature type="active site" evidence="1">
    <location>
        <position position="130"/>
    </location>
</feature>
<sequence>MLAKRIIPCLDVRDGQVVKGVQFRNHEIIGDIVPLAKRYADEGADELVFYDITASSDGRVVDKSWVARVAEVIDIPFCVAGGIRSIDDAAKILSFGADKISINSPALADPTLITRLADRFGVQCIVVGIDTWFDDATGKYHVNQYTGDENRTRVTQWETLDWVQEVQQRGAGEIVLNMMNQDGVRNGYDLTQLKKVRDVCRVPLIASGGAGTMEHFLEAFRDADVDGALAASVFHKQIINIGELKAYLAGQGVEIRIC</sequence>
<dbReference type="EC" id="4.3.2.10" evidence="1"/>
<dbReference type="EMBL" id="FM200053">
    <property type="protein sequence ID" value="CAR58880.1"/>
    <property type="molecule type" value="Genomic_DNA"/>
</dbReference>
<dbReference type="RefSeq" id="WP_000880125.1">
    <property type="nucleotide sequence ID" value="NC_011147.1"/>
</dbReference>
<dbReference type="SMR" id="B5BFB5"/>
<dbReference type="KEGG" id="sek:SSPA0744"/>
<dbReference type="HOGENOM" id="CLU_048577_4_0_6"/>
<dbReference type="UniPathway" id="UPA00031">
    <property type="reaction ID" value="UER00010"/>
</dbReference>
<dbReference type="Proteomes" id="UP000001869">
    <property type="component" value="Chromosome"/>
</dbReference>
<dbReference type="GO" id="GO:0005737">
    <property type="term" value="C:cytoplasm"/>
    <property type="evidence" value="ECO:0007669"/>
    <property type="project" value="UniProtKB-SubCell"/>
</dbReference>
<dbReference type="GO" id="GO:0000107">
    <property type="term" value="F:imidazoleglycerol-phosphate synthase activity"/>
    <property type="evidence" value="ECO:0007669"/>
    <property type="project" value="UniProtKB-UniRule"/>
</dbReference>
<dbReference type="GO" id="GO:0016829">
    <property type="term" value="F:lyase activity"/>
    <property type="evidence" value="ECO:0007669"/>
    <property type="project" value="UniProtKB-KW"/>
</dbReference>
<dbReference type="GO" id="GO:0000105">
    <property type="term" value="P:L-histidine biosynthetic process"/>
    <property type="evidence" value="ECO:0007669"/>
    <property type="project" value="UniProtKB-UniRule"/>
</dbReference>
<dbReference type="CDD" id="cd04731">
    <property type="entry name" value="HisF"/>
    <property type="match status" value="1"/>
</dbReference>
<dbReference type="FunFam" id="3.20.20.70:FF:000006">
    <property type="entry name" value="Imidazole glycerol phosphate synthase subunit HisF"/>
    <property type="match status" value="1"/>
</dbReference>
<dbReference type="Gene3D" id="3.20.20.70">
    <property type="entry name" value="Aldolase class I"/>
    <property type="match status" value="1"/>
</dbReference>
<dbReference type="HAMAP" id="MF_01013">
    <property type="entry name" value="HisF"/>
    <property type="match status" value="1"/>
</dbReference>
<dbReference type="InterPro" id="IPR013785">
    <property type="entry name" value="Aldolase_TIM"/>
</dbReference>
<dbReference type="InterPro" id="IPR006062">
    <property type="entry name" value="His_biosynth"/>
</dbReference>
<dbReference type="InterPro" id="IPR004651">
    <property type="entry name" value="HisF"/>
</dbReference>
<dbReference type="InterPro" id="IPR050064">
    <property type="entry name" value="IGPS_HisA/HisF"/>
</dbReference>
<dbReference type="InterPro" id="IPR011060">
    <property type="entry name" value="RibuloseP-bd_barrel"/>
</dbReference>
<dbReference type="NCBIfam" id="TIGR00735">
    <property type="entry name" value="hisF"/>
    <property type="match status" value="1"/>
</dbReference>
<dbReference type="PANTHER" id="PTHR21235:SF2">
    <property type="entry name" value="IMIDAZOLE GLYCEROL PHOSPHATE SYNTHASE HISHF"/>
    <property type="match status" value="1"/>
</dbReference>
<dbReference type="PANTHER" id="PTHR21235">
    <property type="entry name" value="IMIDAZOLE GLYCEROL PHOSPHATE SYNTHASE SUBUNIT HISF/H IGP SYNTHASE SUBUNIT HISF/H"/>
    <property type="match status" value="1"/>
</dbReference>
<dbReference type="Pfam" id="PF00977">
    <property type="entry name" value="His_biosynth"/>
    <property type="match status" value="1"/>
</dbReference>
<dbReference type="SUPFAM" id="SSF51366">
    <property type="entry name" value="Ribulose-phoshate binding barrel"/>
    <property type="match status" value="1"/>
</dbReference>
<proteinExistence type="inferred from homology"/>
<comment type="function">
    <text evidence="1">IGPS catalyzes the conversion of PRFAR and glutamine to IGP, AICAR and glutamate. The HisF subunit catalyzes the cyclization activity that produces IGP and AICAR from PRFAR using the ammonia provided by the HisH subunit.</text>
</comment>
<comment type="catalytic activity">
    <reaction evidence="1">
        <text>5-[(5-phospho-1-deoxy-D-ribulos-1-ylimino)methylamino]-1-(5-phospho-beta-D-ribosyl)imidazole-4-carboxamide + L-glutamine = D-erythro-1-(imidazol-4-yl)glycerol 3-phosphate + 5-amino-1-(5-phospho-beta-D-ribosyl)imidazole-4-carboxamide + L-glutamate + H(+)</text>
        <dbReference type="Rhea" id="RHEA:24793"/>
        <dbReference type="ChEBI" id="CHEBI:15378"/>
        <dbReference type="ChEBI" id="CHEBI:29985"/>
        <dbReference type="ChEBI" id="CHEBI:58278"/>
        <dbReference type="ChEBI" id="CHEBI:58359"/>
        <dbReference type="ChEBI" id="CHEBI:58475"/>
        <dbReference type="ChEBI" id="CHEBI:58525"/>
        <dbReference type="EC" id="4.3.2.10"/>
    </reaction>
</comment>
<comment type="pathway">
    <text evidence="1">Amino-acid biosynthesis; L-histidine biosynthesis; L-histidine from 5-phospho-alpha-D-ribose 1-diphosphate: step 5/9.</text>
</comment>
<comment type="subunit">
    <text evidence="1">Heterodimer of HisH and HisF.</text>
</comment>
<comment type="subcellular location">
    <subcellularLocation>
        <location evidence="1">Cytoplasm</location>
    </subcellularLocation>
</comment>
<comment type="similarity">
    <text evidence="1">Belongs to the HisA/HisF family.</text>
</comment>
<organism>
    <name type="scientific">Salmonella paratyphi A (strain AKU_12601)</name>
    <dbReference type="NCBI Taxonomy" id="554290"/>
    <lineage>
        <taxon>Bacteria</taxon>
        <taxon>Pseudomonadati</taxon>
        <taxon>Pseudomonadota</taxon>
        <taxon>Gammaproteobacteria</taxon>
        <taxon>Enterobacterales</taxon>
        <taxon>Enterobacteriaceae</taxon>
        <taxon>Salmonella</taxon>
    </lineage>
</organism>
<gene>
    <name evidence="1" type="primary">hisF</name>
    <name type="ordered locus">SSPA0744</name>
</gene>
<accession>B5BFB5</accession>
<keyword id="KW-0028">Amino-acid biosynthesis</keyword>
<keyword id="KW-0963">Cytoplasm</keyword>
<keyword id="KW-0368">Histidine biosynthesis</keyword>
<keyword id="KW-0456">Lyase</keyword>
<name>HIS6_SALPK</name>
<protein>
    <recommendedName>
        <fullName evidence="1">Imidazole glycerol phosphate synthase subunit HisF</fullName>
        <ecNumber evidence="1">4.3.2.10</ecNumber>
    </recommendedName>
    <alternativeName>
        <fullName evidence="1">IGP synthase cyclase subunit</fullName>
    </alternativeName>
    <alternativeName>
        <fullName evidence="1">IGP synthase subunit HisF</fullName>
    </alternativeName>
    <alternativeName>
        <fullName evidence="1">ImGP synthase subunit HisF</fullName>
        <shortName evidence="1">IGPS subunit HisF</shortName>
    </alternativeName>
</protein>